<evidence type="ECO:0000250" key="1">
    <source>
        <dbReference type="UniProtKB" id="Q6IAA8"/>
    </source>
</evidence>
<evidence type="ECO:0000256" key="2">
    <source>
        <dbReference type="SAM" id="MobiDB-lite"/>
    </source>
</evidence>
<evidence type="ECO:0000305" key="3"/>
<name>LTOR1_XENTR</name>
<gene>
    <name type="primary">lamtor1</name>
</gene>
<organism>
    <name type="scientific">Xenopus tropicalis</name>
    <name type="common">Western clawed frog</name>
    <name type="synonym">Silurana tropicalis</name>
    <dbReference type="NCBI Taxonomy" id="8364"/>
    <lineage>
        <taxon>Eukaryota</taxon>
        <taxon>Metazoa</taxon>
        <taxon>Chordata</taxon>
        <taxon>Craniata</taxon>
        <taxon>Vertebrata</taxon>
        <taxon>Euteleostomi</taxon>
        <taxon>Amphibia</taxon>
        <taxon>Batrachia</taxon>
        <taxon>Anura</taxon>
        <taxon>Pipoidea</taxon>
        <taxon>Pipidae</taxon>
        <taxon>Xenopodinae</taxon>
        <taxon>Xenopus</taxon>
        <taxon>Silurana</taxon>
    </lineage>
</organism>
<proteinExistence type="evidence at transcript level"/>
<comment type="function">
    <text evidence="1">Key component of the Ragulator complex, a multiprotein complex involved in amino acid sensing and activation of mTORC1, a signaling complex promoting cell growth in response to growth factors, energy levels, and amino acids. Activated by amino acids through a mechanism involving the lysosomal V-ATPase, the Ragulator plays a dual role for the small GTPases Rag (RagA/RRAGA, RagB/RRAGB, RagC/RRAGC and/or RagD/RRAGD): it (1) acts as a guanine nucleotide exchange factor (GEF), activating the small GTPases Rag and (2) mediates recruitment of Rag GTPases to the lysosome membrane. Activated Ragulator and Rag GTPases function as a scaffold recruiting mTORC1 to lysosomes where it is in turn activated. LAMTOR1 is directly responsible for anchoring the Ragulator complex to the lysosomal membrane. LAMTOR1 wraps around the other subunits of the Ragulator complex to hold them in place and interacts with the Rag GTPases, thereby playing a key role in the recruitment of the mTORC1 complex to lysosomes.</text>
</comment>
<comment type="subunit">
    <text evidence="1">Part of the Ragulator complex composed of lamtor1, lamtor2, lamtor3, lamtor4 and lamtor5. The Ragulator complex interacts with slc38a9; the probable amino acid sensor. Component of the lysosomal folliculin complex (LFC).</text>
</comment>
<comment type="subcellular location">
    <subcellularLocation>
        <location evidence="1">Lysosome membrane</location>
        <topology evidence="1">Lipid-anchor</topology>
        <orientation evidence="1">Cytoplasmic side</orientation>
    </subcellularLocation>
    <subcellularLocation>
        <location evidence="1">Late endosome membrane</location>
        <topology evidence="1">Lipid-anchor</topology>
        <orientation evidence="1">Cytoplasmic side</orientation>
    </subcellularLocation>
    <text evidence="1">Recruited to lysosome and endosome membranes through N-terminal myristoylation and palmitoylation.</text>
</comment>
<comment type="PTM">
    <text evidence="1">N-terminal myristoylation and palmitoylation mediates its recruitment to lysosome membranes, thereby promoting localization of the Ragulator complex to lysosomes. N-myristoylation by NMT1 is required for palmitoylation at Cys-3 and Cys-4.</text>
</comment>
<comment type="similarity">
    <text evidence="3">Belongs to the LAMTOR1 family.</text>
</comment>
<keyword id="KW-0967">Endosome</keyword>
<keyword id="KW-0449">Lipoprotein</keyword>
<keyword id="KW-0458">Lysosome</keyword>
<keyword id="KW-0472">Membrane</keyword>
<keyword id="KW-0519">Myristate</keyword>
<keyword id="KW-0564">Palmitate</keyword>
<keyword id="KW-1185">Reference proteome</keyword>
<protein>
    <recommendedName>
        <fullName>Ragulator complex protein LAMTOR1</fullName>
    </recommendedName>
    <alternativeName>
        <fullName>Late endosomal/lysosomal adaptor and MAPK and MTOR activator 1</fullName>
    </alternativeName>
</protein>
<sequence>MGCCYSGETDTGKGDQGEREHLLPQSQSLPNKAPNESEQNSTNNPSARTDEQAMLSRILAKTAQNIIDVSAVESQGMEQHECMDRARQYSTRLAKLSSNLMDWKKVPPLPSLTSQPHQILASDPVPFADIQQVSKIAAYAFSALSQIRVDAKEDLVVQFGIP</sequence>
<dbReference type="EMBL" id="BC064269">
    <property type="protein sequence ID" value="AAH64269.1"/>
    <property type="molecule type" value="mRNA"/>
</dbReference>
<dbReference type="RefSeq" id="NP_989303.1">
    <property type="nucleotide sequence ID" value="NM_203972.1"/>
</dbReference>
<dbReference type="SMR" id="Q6P2W7"/>
<dbReference type="FunCoup" id="Q6P2W7">
    <property type="interactions" value="1492"/>
</dbReference>
<dbReference type="STRING" id="8364.ENSXETP00000033697"/>
<dbReference type="PaxDb" id="8364-ENSXETP00000053635"/>
<dbReference type="DNASU" id="394922"/>
<dbReference type="GeneID" id="394922"/>
<dbReference type="KEGG" id="xtr:394922"/>
<dbReference type="AGR" id="Xenbase:XB-GENE-5879626"/>
<dbReference type="CTD" id="55004"/>
<dbReference type="Xenbase" id="XB-GENE-5879626">
    <property type="gene designation" value="lamtor1"/>
</dbReference>
<dbReference type="eggNOG" id="ENOG502RYX2">
    <property type="taxonomic scope" value="Eukaryota"/>
</dbReference>
<dbReference type="HOGENOM" id="CLU_136283_0_0_1"/>
<dbReference type="InParanoid" id="Q6P2W7"/>
<dbReference type="OMA" id="MGCCYSF"/>
<dbReference type="OrthoDB" id="5562028at2759"/>
<dbReference type="PhylomeDB" id="Q6P2W7"/>
<dbReference type="TreeFam" id="TF323788"/>
<dbReference type="Reactome" id="R-XTR-1632852">
    <property type="pathway name" value="Macroautophagy"/>
</dbReference>
<dbReference type="Reactome" id="R-XTR-165159">
    <property type="pathway name" value="MTOR signalling"/>
</dbReference>
<dbReference type="Reactome" id="R-XTR-380972">
    <property type="pathway name" value="Energy dependent regulation of mTOR by LKB1-AMPK"/>
</dbReference>
<dbReference type="Reactome" id="R-XTR-5628897">
    <property type="pathway name" value="TP53 Regulates Metabolic Genes"/>
</dbReference>
<dbReference type="Reactome" id="R-XTR-6798695">
    <property type="pathway name" value="Neutrophil degranulation"/>
</dbReference>
<dbReference type="Reactome" id="R-XTR-9013149">
    <property type="pathway name" value="RAC1 GTPase cycle"/>
</dbReference>
<dbReference type="Reactome" id="R-XTR-9013404">
    <property type="pathway name" value="RAC2 GTPase cycle"/>
</dbReference>
<dbReference type="Reactome" id="R-XTR-9013406">
    <property type="pathway name" value="RHOQ GTPase cycle"/>
</dbReference>
<dbReference type="Reactome" id="R-XTR-9013407">
    <property type="pathway name" value="RHOH GTPase cycle"/>
</dbReference>
<dbReference type="Reactome" id="R-XTR-9013408">
    <property type="pathway name" value="RHOG GTPase cycle"/>
</dbReference>
<dbReference type="Reactome" id="R-XTR-9013423">
    <property type="pathway name" value="RAC3 GTPase cycle"/>
</dbReference>
<dbReference type="Reactome" id="R-XTR-9639288">
    <property type="pathway name" value="Amino acids regulate mTORC1"/>
</dbReference>
<dbReference type="Proteomes" id="UP000008143">
    <property type="component" value="Chromosome 2"/>
</dbReference>
<dbReference type="GO" id="GO:0031902">
    <property type="term" value="C:late endosome membrane"/>
    <property type="evidence" value="ECO:0000250"/>
    <property type="project" value="UniProtKB"/>
</dbReference>
<dbReference type="GO" id="GO:0005765">
    <property type="term" value="C:lysosomal membrane"/>
    <property type="evidence" value="ECO:0000250"/>
    <property type="project" value="UniProtKB"/>
</dbReference>
<dbReference type="GO" id="GO:0005764">
    <property type="term" value="C:lysosome"/>
    <property type="evidence" value="ECO:0000250"/>
    <property type="project" value="UniProtKB"/>
</dbReference>
<dbReference type="GO" id="GO:0045121">
    <property type="term" value="C:membrane raft"/>
    <property type="evidence" value="ECO:0000250"/>
    <property type="project" value="UniProtKB"/>
</dbReference>
<dbReference type="GO" id="GO:0071986">
    <property type="term" value="C:Ragulator complex"/>
    <property type="evidence" value="ECO:0000250"/>
    <property type="project" value="UniProtKB"/>
</dbReference>
<dbReference type="GO" id="GO:0043495">
    <property type="term" value="F:protein-membrane adaptor activity"/>
    <property type="evidence" value="ECO:0000250"/>
    <property type="project" value="UniProtKB"/>
</dbReference>
<dbReference type="GO" id="GO:0071230">
    <property type="term" value="P:cellular response to amino acid stimulus"/>
    <property type="evidence" value="ECO:0000250"/>
    <property type="project" value="UniProtKB"/>
</dbReference>
<dbReference type="GO" id="GO:0042632">
    <property type="term" value="P:cholesterol homeostasis"/>
    <property type="evidence" value="ECO:0000250"/>
    <property type="project" value="UniProtKB"/>
</dbReference>
<dbReference type="GO" id="GO:0016197">
    <property type="term" value="P:endosomal transport"/>
    <property type="evidence" value="ECO:0000250"/>
    <property type="project" value="UniProtKB"/>
</dbReference>
<dbReference type="GO" id="GO:0007032">
    <property type="term" value="P:endosome organization"/>
    <property type="evidence" value="ECO:0000250"/>
    <property type="project" value="UniProtKB"/>
</dbReference>
<dbReference type="GO" id="GO:0032418">
    <property type="term" value="P:lysosome localization"/>
    <property type="evidence" value="ECO:0000250"/>
    <property type="project" value="UniProtKB"/>
</dbReference>
<dbReference type="GO" id="GO:0007040">
    <property type="term" value="P:lysosome organization"/>
    <property type="evidence" value="ECO:0000250"/>
    <property type="project" value="UniProtKB"/>
</dbReference>
<dbReference type="GO" id="GO:0043410">
    <property type="term" value="P:positive regulation of MAPK cascade"/>
    <property type="evidence" value="ECO:0000250"/>
    <property type="project" value="UniProtKB"/>
</dbReference>
<dbReference type="GO" id="GO:0032008">
    <property type="term" value="P:positive regulation of TOR signaling"/>
    <property type="evidence" value="ECO:0000250"/>
    <property type="project" value="UniProtKB"/>
</dbReference>
<dbReference type="GO" id="GO:1904263">
    <property type="term" value="P:positive regulation of TORC1 signaling"/>
    <property type="evidence" value="ECO:0000250"/>
    <property type="project" value="UniProtKB"/>
</dbReference>
<dbReference type="GO" id="GO:0008104">
    <property type="term" value="P:protein localization"/>
    <property type="evidence" value="ECO:0000250"/>
    <property type="project" value="UniProtKB"/>
</dbReference>
<dbReference type="GO" id="GO:0072657">
    <property type="term" value="P:protein localization to membrane"/>
    <property type="evidence" value="ECO:0000250"/>
    <property type="project" value="UniProtKB"/>
</dbReference>
<dbReference type="GO" id="GO:0001558">
    <property type="term" value="P:regulation of cell growth"/>
    <property type="evidence" value="ECO:0000250"/>
    <property type="project" value="UniProtKB"/>
</dbReference>
<dbReference type="GO" id="GO:0010874">
    <property type="term" value="P:regulation of cholesterol efflux"/>
    <property type="evidence" value="ECO:0000250"/>
    <property type="project" value="UniProtKB"/>
</dbReference>
<dbReference type="GO" id="GO:0060620">
    <property type="term" value="P:regulation of cholesterol import"/>
    <property type="evidence" value="ECO:0000250"/>
    <property type="project" value="UniProtKB"/>
</dbReference>
<dbReference type="GO" id="GO:0001919">
    <property type="term" value="P:regulation of receptor recycling"/>
    <property type="evidence" value="ECO:0000250"/>
    <property type="project" value="UniProtKB"/>
</dbReference>
<dbReference type="InterPro" id="IPR028209">
    <property type="entry name" value="LAMTOR1/MEH1"/>
</dbReference>
<dbReference type="PANTHER" id="PTHR13401">
    <property type="entry name" value="RAGULATOR COMPLEX PROTEIN LAMTOR1"/>
    <property type="match status" value="1"/>
</dbReference>
<dbReference type="PANTHER" id="PTHR13401:SF2">
    <property type="entry name" value="RAGULATOR COMPLEX PROTEIN LAMTOR1"/>
    <property type="match status" value="1"/>
</dbReference>
<dbReference type="Pfam" id="PF15454">
    <property type="entry name" value="LAMTOR"/>
    <property type="match status" value="1"/>
</dbReference>
<dbReference type="SMART" id="SM01262">
    <property type="entry name" value="LAMTOR"/>
    <property type="match status" value="1"/>
</dbReference>
<accession>Q6P2W7</accession>
<reference key="1">
    <citation type="submission" date="2003-12" db="EMBL/GenBank/DDBJ databases">
        <authorList>
            <consortium name="NIH - Xenopus Gene Collection (XGC) project"/>
        </authorList>
    </citation>
    <scope>NUCLEOTIDE SEQUENCE [LARGE SCALE MRNA]</scope>
    <source>
        <tissue>Embryo</tissue>
    </source>
</reference>
<feature type="initiator methionine" description="Removed" evidence="1">
    <location>
        <position position="1"/>
    </location>
</feature>
<feature type="chain" id="PRO_0000274297" description="Ragulator complex protein LAMTOR1">
    <location>
        <begin position="2"/>
        <end position="162"/>
    </location>
</feature>
<feature type="region of interest" description="Disordered" evidence="2">
    <location>
        <begin position="1"/>
        <end position="54"/>
    </location>
</feature>
<feature type="compositionally biased region" description="Basic and acidic residues" evidence="2">
    <location>
        <begin position="10"/>
        <end position="22"/>
    </location>
</feature>
<feature type="compositionally biased region" description="Polar residues" evidence="2">
    <location>
        <begin position="24"/>
        <end position="47"/>
    </location>
</feature>
<feature type="lipid moiety-binding region" description="N-myristoyl glycine" evidence="1">
    <location>
        <position position="2"/>
    </location>
</feature>
<feature type="lipid moiety-binding region" description="S-palmitoyl cysteine" evidence="1">
    <location>
        <position position="3"/>
    </location>
</feature>
<feature type="lipid moiety-binding region" description="S-palmitoyl cysteine" evidence="1">
    <location>
        <position position="4"/>
    </location>
</feature>